<name>RSMG_PSEE4</name>
<comment type="function">
    <text evidence="1">Specifically methylates the N7 position of guanine in position 527 of 16S rRNA.</text>
</comment>
<comment type="catalytic activity">
    <reaction evidence="1">
        <text>guanosine(527) in 16S rRNA + S-adenosyl-L-methionine = N(7)-methylguanosine(527) in 16S rRNA + S-adenosyl-L-homocysteine</text>
        <dbReference type="Rhea" id="RHEA:42732"/>
        <dbReference type="Rhea" id="RHEA-COMP:10209"/>
        <dbReference type="Rhea" id="RHEA-COMP:10210"/>
        <dbReference type="ChEBI" id="CHEBI:57856"/>
        <dbReference type="ChEBI" id="CHEBI:59789"/>
        <dbReference type="ChEBI" id="CHEBI:74269"/>
        <dbReference type="ChEBI" id="CHEBI:74480"/>
        <dbReference type="EC" id="2.1.1.170"/>
    </reaction>
</comment>
<comment type="subcellular location">
    <subcellularLocation>
        <location evidence="1">Cytoplasm</location>
    </subcellularLocation>
</comment>
<comment type="similarity">
    <text evidence="1">Belongs to the methyltransferase superfamily. RNA methyltransferase RsmG family.</text>
</comment>
<reference key="1">
    <citation type="journal article" date="2006" name="Nat. Biotechnol.">
        <title>Complete genome sequence of the entomopathogenic and metabolically versatile soil bacterium Pseudomonas entomophila.</title>
        <authorList>
            <person name="Vodovar N."/>
            <person name="Vallenet D."/>
            <person name="Cruveiller S."/>
            <person name="Rouy Z."/>
            <person name="Barbe V."/>
            <person name="Acosta C."/>
            <person name="Cattolico L."/>
            <person name="Jubin C."/>
            <person name="Lajus A."/>
            <person name="Segurens B."/>
            <person name="Vacherie B."/>
            <person name="Wincker P."/>
            <person name="Weissenbach J."/>
            <person name="Lemaitre B."/>
            <person name="Medigue C."/>
            <person name="Boccard F."/>
        </authorList>
    </citation>
    <scope>NUCLEOTIDE SEQUENCE [LARGE SCALE GENOMIC DNA]</scope>
    <source>
        <strain>L48</strain>
    </source>
</reference>
<sequence length="216" mass="24173">MSSLVTPQHAEELSTGARQLGVELSAQQHELLLGYLALLIKWNKAYNLTAVRDPDEMVSRHLLDSLSVMPFIHNDTQRWLDVGSGGGMPGIPLAILHPHKQVTVLDSNGKKTRFLTQVKMELKLDNLTVIHSRVEEVQPEQPFCGIISRAFSSMENFTNWTRHLGDSRTQWLAMKGLHPADELVALPADFTVESEQALTVPGCQGQRHLLILRRKA</sequence>
<keyword id="KW-0963">Cytoplasm</keyword>
<keyword id="KW-0489">Methyltransferase</keyword>
<keyword id="KW-0698">rRNA processing</keyword>
<keyword id="KW-0949">S-adenosyl-L-methionine</keyword>
<keyword id="KW-0808">Transferase</keyword>
<dbReference type="EC" id="2.1.1.170" evidence="1"/>
<dbReference type="EMBL" id="CT573326">
    <property type="protein sequence ID" value="CAK18159.1"/>
    <property type="molecule type" value="Genomic_DNA"/>
</dbReference>
<dbReference type="RefSeq" id="WP_011536510.1">
    <property type="nucleotide sequence ID" value="NC_008027.1"/>
</dbReference>
<dbReference type="SMR" id="Q1I2H7"/>
<dbReference type="STRING" id="384676.PSEEN5553"/>
<dbReference type="GeneID" id="32808451"/>
<dbReference type="KEGG" id="pen:PSEEN5553"/>
<dbReference type="eggNOG" id="COG0357">
    <property type="taxonomic scope" value="Bacteria"/>
</dbReference>
<dbReference type="HOGENOM" id="CLU_065341_2_0_6"/>
<dbReference type="OrthoDB" id="9808773at2"/>
<dbReference type="Proteomes" id="UP000000658">
    <property type="component" value="Chromosome"/>
</dbReference>
<dbReference type="GO" id="GO:0005829">
    <property type="term" value="C:cytosol"/>
    <property type="evidence" value="ECO:0007669"/>
    <property type="project" value="TreeGrafter"/>
</dbReference>
<dbReference type="GO" id="GO:0070043">
    <property type="term" value="F:rRNA (guanine-N7-)-methyltransferase activity"/>
    <property type="evidence" value="ECO:0007669"/>
    <property type="project" value="UniProtKB-UniRule"/>
</dbReference>
<dbReference type="CDD" id="cd02440">
    <property type="entry name" value="AdoMet_MTases"/>
    <property type="match status" value="1"/>
</dbReference>
<dbReference type="Gene3D" id="3.40.50.150">
    <property type="entry name" value="Vaccinia Virus protein VP39"/>
    <property type="match status" value="1"/>
</dbReference>
<dbReference type="HAMAP" id="MF_00074">
    <property type="entry name" value="16SrRNA_methyltr_G"/>
    <property type="match status" value="1"/>
</dbReference>
<dbReference type="InterPro" id="IPR003682">
    <property type="entry name" value="rRNA_ssu_MeTfrase_G"/>
</dbReference>
<dbReference type="InterPro" id="IPR029063">
    <property type="entry name" value="SAM-dependent_MTases_sf"/>
</dbReference>
<dbReference type="NCBIfam" id="TIGR00138">
    <property type="entry name" value="rsmG_gidB"/>
    <property type="match status" value="1"/>
</dbReference>
<dbReference type="PANTHER" id="PTHR31760">
    <property type="entry name" value="S-ADENOSYL-L-METHIONINE-DEPENDENT METHYLTRANSFERASES SUPERFAMILY PROTEIN"/>
    <property type="match status" value="1"/>
</dbReference>
<dbReference type="PANTHER" id="PTHR31760:SF0">
    <property type="entry name" value="S-ADENOSYL-L-METHIONINE-DEPENDENT METHYLTRANSFERASES SUPERFAMILY PROTEIN"/>
    <property type="match status" value="1"/>
</dbReference>
<dbReference type="Pfam" id="PF02527">
    <property type="entry name" value="GidB"/>
    <property type="match status" value="1"/>
</dbReference>
<dbReference type="PIRSF" id="PIRSF003078">
    <property type="entry name" value="GidB"/>
    <property type="match status" value="1"/>
</dbReference>
<dbReference type="SUPFAM" id="SSF53335">
    <property type="entry name" value="S-adenosyl-L-methionine-dependent methyltransferases"/>
    <property type="match status" value="1"/>
</dbReference>
<proteinExistence type="inferred from homology"/>
<evidence type="ECO:0000255" key="1">
    <source>
        <dbReference type="HAMAP-Rule" id="MF_00074"/>
    </source>
</evidence>
<gene>
    <name evidence="1" type="primary">rsmG</name>
    <name type="ordered locus">PSEEN5553</name>
</gene>
<feature type="chain" id="PRO_1000010186" description="Ribosomal RNA small subunit methyltransferase G">
    <location>
        <begin position="1"/>
        <end position="216"/>
    </location>
</feature>
<feature type="binding site" evidence="1">
    <location>
        <position position="83"/>
    </location>
    <ligand>
        <name>S-adenosyl-L-methionine</name>
        <dbReference type="ChEBI" id="CHEBI:59789"/>
    </ligand>
</feature>
<feature type="binding site" evidence="1">
    <location>
        <position position="88"/>
    </location>
    <ligand>
        <name>S-adenosyl-L-methionine</name>
        <dbReference type="ChEBI" id="CHEBI:59789"/>
    </ligand>
</feature>
<feature type="binding site" evidence="1">
    <location>
        <begin position="134"/>
        <end position="135"/>
    </location>
    <ligand>
        <name>S-adenosyl-L-methionine</name>
        <dbReference type="ChEBI" id="CHEBI:59789"/>
    </ligand>
</feature>
<feature type="binding site" evidence="1">
    <location>
        <position position="149"/>
    </location>
    <ligand>
        <name>S-adenosyl-L-methionine</name>
        <dbReference type="ChEBI" id="CHEBI:59789"/>
    </ligand>
</feature>
<protein>
    <recommendedName>
        <fullName evidence="1">Ribosomal RNA small subunit methyltransferase G</fullName>
        <ecNumber evidence="1">2.1.1.170</ecNumber>
    </recommendedName>
    <alternativeName>
        <fullName evidence="1">16S rRNA 7-methylguanosine methyltransferase</fullName>
        <shortName evidence="1">16S rRNA m7G methyltransferase</shortName>
    </alternativeName>
</protein>
<accession>Q1I2H7</accession>
<organism>
    <name type="scientific">Pseudomonas entomophila (strain L48)</name>
    <dbReference type="NCBI Taxonomy" id="384676"/>
    <lineage>
        <taxon>Bacteria</taxon>
        <taxon>Pseudomonadati</taxon>
        <taxon>Pseudomonadota</taxon>
        <taxon>Gammaproteobacteria</taxon>
        <taxon>Pseudomonadales</taxon>
        <taxon>Pseudomonadaceae</taxon>
        <taxon>Pseudomonas</taxon>
    </lineage>
</organism>